<gene>
    <name type="ordered locus">YGL118C</name>
</gene>
<accession>P53132</accession>
<accession>A0A1S0T079</accession>
<dbReference type="EMBL" id="Z72640">
    <property type="protein sequence ID" value="CAA96826.1"/>
    <property type="molecule type" value="Genomic_DNA"/>
</dbReference>
<dbReference type="EMBL" id="BK006941">
    <property type="protein sequence ID" value="DAA80296.1"/>
    <property type="molecule type" value="Genomic_DNA"/>
</dbReference>
<dbReference type="PIR" id="S64128">
    <property type="entry name" value="S64128"/>
</dbReference>
<dbReference type="RefSeq" id="NP_001335776.1">
    <property type="nucleotide sequence ID" value="NM_001348835.1"/>
</dbReference>
<dbReference type="FunCoup" id="P53132">
    <property type="interactions" value="15"/>
</dbReference>
<dbReference type="PaxDb" id="4932-YGL118C"/>
<dbReference type="EnsemblFungi" id="YGL118C_mRNA">
    <property type="protein sequence ID" value="YGL118C"/>
    <property type="gene ID" value="YGL118C"/>
</dbReference>
<dbReference type="GeneID" id="852760"/>
<dbReference type="AGR" id="SGD:S000003086"/>
<dbReference type="SGD" id="S000003086">
    <property type="gene designation" value="YGL118C"/>
</dbReference>
<dbReference type="HOGENOM" id="CLU_1983303_0_0_1"/>
<dbReference type="InParanoid" id="P53132"/>
<dbReference type="PRO" id="PR:P53132"/>
<dbReference type="Proteomes" id="UP000002311">
    <property type="component" value="Chromosome VII"/>
</dbReference>
<dbReference type="RNAct" id="P53132">
    <property type="molecule type" value="protein"/>
</dbReference>
<sequence>MPPEPVWHISAVTEKFPTHGAILYISLTFSFYKKMLRVLWHILLVYGKHAGKRKYRKVMTETNDSLYMKRNNCSGEYATLALSTRSCSFNMQQNDWVTMEGLFPFVMVLCHLETKPMKIGIQLILQVPFMGLGIHKENKEFYLIL</sequence>
<feature type="chain" id="PRO_0000202746" description="Uncharacterized protein YGL118C">
    <location>
        <begin position="1"/>
        <end position="145"/>
    </location>
</feature>
<keyword id="KW-1185">Reference proteome</keyword>
<organism>
    <name type="scientific">Saccharomyces cerevisiae (strain ATCC 204508 / S288c)</name>
    <name type="common">Baker's yeast</name>
    <dbReference type="NCBI Taxonomy" id="559292"/>
    <lineage>
        <taxon>Eukaryota</taxon>
        <taxon>Fungi</taxon>
        <taxon>Dikarya</taxon>
        <taxon>Ascomycota</taxon>
        <taxon>Saccharomycotina</taxon>
        <taxon>Saccharomycetes</taxon>
        <taxon>Saccharomycetales</taxon>
        <taxon>Saccharomycetaceae</taxon>
        <taxon>Saccharomyces</taxon>
    </lineage>
</organism>
<reference key="1">
    <citation type="journal article" date="1997" name="Nature">
        <title>The nucleotide sequence of Saccharomyces cerevisiae chromosome VII.</title>
        <authorList>
            <person name="Tettelin H."/>
            <person name="Agostoni-Carbone M.L."/>
            <person name="Albermann K."/>
            <person name="Albers M."/>
            <person name="Arroyo J."/>
            <person name="Backes U."/>
            <person name="Barreiros T."/>
            <person name="Bertani I."/>
            <person name="Bjourson A.J."/>
            <person name="Brueckner M."/>
            <person name="Bruschi C.V."/>
            <person name="Carignani G."/>
            <person name="Castagnoli L."/>
            <person name="Cerdan E."/>
            <person name="Clemente M.L."/>
            <person name="Coblenz A."/>
            <person name="Coglievina M."/>
            <person name="Coissac E."/>
            <person name="Defoor E."/>
            <person name="Del Bino S."/>
            <person name="Delius H."/>
            <person name="Delneri D."/>
            <person name="de Wergifosse P."/>
            <person name="Dujon B."/>
            <person name="Durand P."/>
            <person name="Entian K.-D."/>
            <person name="Eraso P."/>
            <person name="Escribano V."/>
            <person name="Fabiani L."/>
            <person name="Fartmann B."/>
            <person name="Feroli F."/>
            <person name="Feuermann M."/>
            <person name="Frontali L."/>
            <person name="Garcia-Gonzalez M."/>
            <person name="Garcia-Saez M.I."/>
            <person name="Goffeau A."/>
            <person name="Guerreiro P."/>
            <person name="Hani J."/>
            <person name="Hansen M."/>
            <person name="Hebling U."/>
            <person name="Hernandez K."/>
            <person name="Heumann K."/>
            <person name="Hilger F."/>
            <person name="Hofmann B."/>
            <person name="Indge K.J."/>
            <person name="James C.M."/>
            <person name="Klima R."/>
            <person name="Koetter P."/>
            <person name="Kramer B."/>
            <person name="Kramer W."/>
            <person name="Lauquin G."/>
            <person name="Leuther H."/>
            <person name="Louis E.J."/>
            <person name="Maillier E."/>
            <person name="Marconi A."/>
            <person name="Martegani E."/>
            <person name="Mazon M.J."/>
            <person name="Mazzoni C."/>
            <person name="McReynolds A.D.K."/>
            <person name="Melchioretto P."/>
            <person name="Mewes H.-W."/>
            <person name="Minenkova O."/>
            <person name="Mueller-Auer S."/>
            <person name="Nawrocki A."/>
            <person name="Netter P."/>
            <person name="Neu R."/>
            <person name="Nombela C."/>
            <person name="Oliver S.G."/>
            <person name="Panzeri L."/>
            <person name="Paoluzi S."/>
            <person name="Plevani P."/>
            <person name="Portetelle D."/>
            <person name="Portillo F."/>
            <person name="Potier S."/>
            <person name="Purnelle B."/>
            <person name="Rieger M."/>
            <person name="Riles L."/>
            <person name="Rinaldi T."/>
            <person name="Robben J."/>
            <person name="Rodrigues-Pousada C."/>
            <person name="Rodriguez-Belmonte E."/>
            <person name="Rodriguez-Torres A.M."/>
            <person name="Rose M."/>
            <person name="Ruzzi M."/>
            <person name="Saliola M."/>
            <person name="Sanchez-Perez M."/>
            <person name="Schaefer B."/>
            <person name="Schaefer M."/>
            <person name="Scharfe M."/>
            <person name="Schmidheini T."/>
            <person name="Schreer A."/>
            <person name="Skala J."/>
            <person name="Souciet J.-L."/>
            <person name="Steensma H.Y."/>
            <person name="Talla E."/>
            <person name="Thierry A."/>
            <person name="Vandenbol M."/>
            <person name="van der Aart Q.J.M."/>
            <person name="Van Dyck L."/>
            <person name="Vanoni M."/>
            <person name="Verhasselt P."/>
            <person name="Voet M."/>
            <person name="Volckaert G."/>
            <person name="Wambutt R."/>
            <person name="Watson M.D."/>
            <person name="Weber N."/>
            <person name="Wedler E."/>
            <person name="Wedler H."/>
            <person name="Wipfli P."/>
            <person name="Wolf K."/>
            <person name="Wright L.F."/>
            <person name="Zaccaria P."/>
            <person name="Zimmermann M."/>
            <person name="Zollner A."/>
            <person name="Kleine K."/>
        </authorList>
    </citation>
    <scope>NUCLEOTIDE SEQUENCE [LARGE SCALE GENOMIC DNA]</scope>
    <source>
        <strain>ATCC 204508 / S288c</strain>
    </source>
</reference>
<reference key="2">
    <citation type="journal article" date="2014" name="G3 (Bethesda)">
        <title>The reference genome sequence of Saccharomyces cerevisiae: Then and now.</title>
        <authorList>
            <person name="Engel S.R."/>
            <person name="Dietrich F.S."/>
            <person name="Fisk D.G."/>
            <person name="Binkley G."/>
            <person name="Balakrishnan R."/>
            <person name="Costanzo M.C."/>
            <person name="Dwight S.S."/>
            <person name="Hitz B.C."/>
            <person name="Karra K."/>
            <person name="Nash R.S."/>
            <person name="Weng S."/>
            <person name="Wong E.D."/>
            <person name="Lloyd P."/>
            <person name="Skrzypek M.S."/>
            <person name="Miyasato S.R."/>
            <person name="Simison M."/>
            <person name="Cherry J.M."/>
        </authorList>
    </citation>
    <scope>GENOME REANNOTATION</scope>
    <source>
        <strain>ATCC 204508 / S288c</strain>
    </source>
</reference>
<name>YGL8_YEAST</name>
<protein>
    <recommendedName>
        <fullName>Uncharacterized protein YGL118C</fullName>
    </recommendedName>
</protein>
<proteinExistence type="predicted"/>